<comment type="function">
    <text evidence="1">Cell wall formation. Catalyzes the transfer of a GlcNAc subunit on undecaprenyl-pyrophosphoryl-MurNAc-pentapeptide (lipid intermediate I) to form undecaprenyl-pyrophosphoryl-MurNAc-(pentapeptide)GlcNAc (lipid intermediate II).</text>
</comment>
<comment type="catalytic activity">
    <reaction evidence="1">
        <text>Mur2Ac(oyl-L-Ala-gamma-D-Glu-L-Lys-D-Ala-D-Ala)-di-trans,octa-cis-undecaprenyl diphosphate + UDP-N-acetyl-alpha-D-glucosamine = beta-D-GlcNAc-(1-&gt;4)-Mur2Ac(oyl-L-Ala-gamma-D-Glu-L-Lys-D-Ala-D-Ala)-di-trans,octa-cis-undecaprenyl diphosphate + UDP + H(+)</text>
        <dbReference type="Rhea" id="RHEA:23192"/>
        <dbReference type="ChEBI" id="CHEBI:15378"/>
        <dbReference type="ChEBI" id="CHEBI:57705"/>
        <dbReference type="ChEBI" id="CHEBI:58223"/>
        <dbReference type="ChEBI" id="CHEBI:60032"/>
        <dbReference type="ChEBI" id="CHEBI:60033"/>
        <dbReference type="EC" id="2.4.1.227"/>
    </reaction>
</comment>
<comment type="pathway">
    <text evidence="1">Cell wall biogenesis; peptidoglycan biosynthesis.</text>
</comment>
<comment type="subcellular location">
    <subcellularLocation>
        <location evidence="1">Cell membrane</location>
        <topology evidence="1">Peripheral membrane protein</topology>
        <orientation evidence="1">Cytoplasmic side</orientation>
    </subcellularLocation>
</comment>
<comment type="similarity">
    <text evidence="1">Belongs to the glycosyltransferase 28 family. MurG subfamily.</text>
</comment>
<name>MURG_STREM</name>
<reference key="1">
    <citation type="journal article" date="2008" name="PLoS ONE">
        <title>Genome sequence of a lancefield group C Streptococcus zooepidemicus strain causing epidemic nephritis: new information about an old disease.</title>
        <authorList>
            <person name="Beres S.B."/>
            <person name="Sesso R."/>
            <person name="Pinto S.W.L."/>
            <person name="Hoe N.P."/>
            <person name="Porcella S.F."/>
            <person name="Deleo F.R."/>
            <person name="Musser J.M."/>
        </authorList>
    </citation>
    <scope>NUCLEOTIDE SEQUENCE [LARGE SCALE GENOMIC DNA]</scope>
    <source>
        <strain>MGCS10565</strain>
    </source>
</reference>
<keyword id="KW-0131">Cell cycle</keyword>
<keyword id="KW-0132">Cell division</keyword>
<keyword id="KW-1003">Cell membrane</keyword>
<keyword id="KW-0133">Cell shape</keyword>
<keyword id="KW-0961">Cell wall biogenesis/degradation</keyword>
<keyword id="KW-0328">Glycosyltransferase</keyword>
<keyword id="KW-0472">Membrane</keyword>
<keyword id="KW-0573">Peptidoglycan synthesis</keyword>
<keyword id="KW-0808">Transferase</keyword>
<evidence type="ECO:0000255" key="1">
    <source>
        <dbReference type="HAMAP-Rule" id="MF_00033"/>
    </source>
</evidence>
<accession>B4U1U4</accession>
<gene>
    <name evidence="1" type="primary">murG</name>
    <name type="ordered locus">Sez_0592</name>
</gene>
<dbReference type="EC" id="2.4.1.227" evidence="1"/>
<dbReference type="EMBL" id="CP001129">
    <property type="protein sequence ID" value="ACG61961.1"/>
    <property type="molecule type" value="Genomic_DNA"/>
</dbReference>
<dbReference type="RefSeq" id="WP_012515237.1">
    <property type="nucleotide sequence ID" value="NC_011134.1"/>
</dbReference>
<dbReference type="SMR" id="B4U1U4"/>
<dbReference type="CAZy" id="GT28">
    <property type="family name" value="Glycosyltransferase Family 28"/>
</dbReference>
<dbReference type="KEGG" id="sez:Sez_0592"/>
<dbReference type="HOGENOM" id="CLU_037404_0_0_9"/>
<dbReference type="UniPathway" id="UPA00219"/>
<dbReference type="Proteomes" id="UP000001873">
    <property type="component" value="Chromosome"/>
</dbReference>
<dbReference type="GO" id="GO:0005886">
    <property type="term" value="C:plasma membrane"/>
    <property type="evidence" value="ECO:0007669"/>
    <property type="project" value="UniProtKB-SubCell"/>
</dbReference>
<dbReference type="GO" id="GO:0050511">
    <property type="term" value="F:undecaprenyldiphospho-muramoylpentapeptide beta-N-acetylglucosaminyltransferase activity"/>
    <property type="evidence" value="ECO:0007669"/>
    <property type="project" value="UniProtKB-UniRule"/>
</dbReference>
<dbReference type="GO" id="GO:0005975">
    <property type="term" value="P:carbohydrate metabolic process"/>
    <property type="evidence" value="ECO:0007669"/>
    <property type="project" value="InterPro"/>
</dbReference>
<dbReference type="GO" id="GO:0051301">
    <property type="term" value="P:cell division"/>
    <property type="evidence" value="ECO:0007669"/>
    <property type="project" value="UniProtKB-KW"/>
</dbReference>
<dbReference type="GO" id="GO:0071555">
    <property type="term" value="P:cell wall organization"/>
    <property type="evidence" value="ECO:0007669"/>
    <property type="project" value="UniProtKB-KW"/>
</dbReference>
<dbReference type="GO" id="GO:0030259">
    <property type="term" value="P:lipid glycosylation"/>
    <property type="evidence" value="ECO:0007669"/>
    <property type="project" value="UniProtKB-UniRule"/>
</dbReference>
<dbReference type="GO" id="GO:0009252">
    <property type="term" value="P:peptidoglycan biosynthetic process"/>
    <property type="evidence" value="ECO:0007669"/>
    <property type="project" value="UniProtKB-UniRule"/>
</dbReference>
<dbReference type="GO" id="GO:0008360">
    <property type="term" value="P:regulation of cell shape"/>
    <property type="evidence" value="ECO:0007669"/>
    <property type="project" value="UniProtKB-KW"/>
</dbReference>
<dbReference type="CDD" id="cd03785">
    <property type="entry name" value="GT28_MurG"/>
    <property type="match status" value="1"/>
</dbReference>
<dbReference type="Gene3D" id="3.40.50.2000">
    <property type="entry name" value="Glycogen Phosphorylase B"/>
    <property type="match status" value="2"/>
</dbReference>
<dbReference type="HAMAP" id="MF_00033">
    <property type="entry name" value="MurG"/>
    <property type="match status" value="1"/>
</dbReference>
<dbReference type="InterPro" id="IPR006009">
    <property type="entry name" value="GlcNAc_MurG"/>
</dbReference>
<dbReference type="InterPro" id="IPR007235">
    <property type="entry name" value="Glyco_trans_28_C"/>
</dbReference>
<dbReference type="InterPro" id="IPR004276">
    <property type="entry name" value="GlycoTrans_28_N"/>
</dbReference>
<dbReference type="PANTHER" id="PTHR21015:SF27">
    <property type="entry name" value="UDP-N-ACETYLGLUCOSAMINE--N-ACETYLMURAMYL-(PENTAPEPTIDE) PYROPHOSPHORYL-UNDECAPRENOL N-ACETYLGLUCOSAMINE TRANSFERASE"/>
    <property type="match status" value="1"/>
</dbReference>
<dbReference type="PANTHER" id="PTHR21015">
    <property type="entry name" value="UDP-N-ACETYLGLUCOSAMINE--N-ACETYLMURAMYL-(PENTAPEPTIDE) PYROPHOSPHORYL-UNDECAPRENOL N-ACETYLGLUCOSAMINE TRANSFERASE 1"/>
    <property type="match status" value="1"/>
</dbReference>
<dbReference type="Pfam" id="PF04101">
    <property type="entry name" value="Glyco_tran_28_C"/>
    <property type="match status" value="1"/>
</dbReference>
<dbReference type="Pfam" id="PF03033">
    <property type="entry name" value="Glyco_transf_28"/>
    <property type="match status" value="1"/>
</dbReference>
<dbReference type="SUPFAM" id="SSF53756">
    <property type="entry name" value="UDP-Glycosyltransferase/glycogen phosphorylase"/>
    <property type="match status" value="1"/>
</dbReference>
<organism>
    <name type="scientific">Streptococcus equi subsp. zooepidemicus (strain MGCS10565)</name>
    <dbReference type="NCBI Taxonomy" id="552526"/>
    <lineage>
        <taxon>Bacteria</taxon>
        <taxon>Bacillati</taxon>
        <taxon>Bacillota</taxon>
        <taxon>Bacilli</taxon>
        <taxon>Lactobacillales</taxon>
        <taxon>Streptococcaceae</taxon>
        <taxon>Streptococcus</taxon>
    </lineage>
</organism>
<proteinExistence type="inferred from homology"/>
<feature type="chain" id="PRO_1000090475" description="UDP-N-acetylglucosamine--N-acetylmuramyl-(pentapeptide) pyrophosphoryl-undecaprenol N-acetylglucosamine transferase">
    <location>
        <begin position="1"/>
        <end position="360"/>
    </location>
</feature>
<feature type="binding site" evidence="1">
    <location>
        <begin position="12"/>
        <end position="14"/>
    </location>
    <ligand>
        <name>UDP-N-acetyl-alpha-D-glucosamine</name>
        <dbReference type="ChEBI" id="CHEBI:57705"/>
    </ligand>
</feature>
<feature type="binding site" evidence="1">
    <location>
        <position position="198"/>
    </location>
    <ligand>
        <name>UDP-N-acetyl-alpha-D-glucosamine</name>
        <dbReference type="ChEBI" id="CHEBI:57705"/>
    </ligand>
</feature>
<feature type="binding site" evidence="1">
    <location>
        <position position="289"/>
    </location>
    <ligand>
        <name>UDP-N-acetyl-alpha-D-glucosamine</name>
        <dbReference type="ChEBI" id="CHEBI:57705"/>
    </ligand>
</feature>
<sequence length="360" mass="40234">MTKKIIFTGGGTAGHVTLNLILIPKFIKDGWEVHYIGDDNGIEHQEIKKSGLDVTFHAIATGKLRRYFSWQNLLDAFKVGFGVMQSLFIIARLRPKALFSKGGFVSVPPVIAARLLGVPAFIHESDLSMGLANRIAYRFATTMYTTFEQEQTLVKLKHVGAVTKVTAPKSRSVASKQLAAVSEYFDPNLKTLLFIGGSAGARVFNRFITDHPELKEDFNIINISGDPSLNELSRHLYRVDYVTDLYQPLMEMADLVVTRGGSNTLFELLAMRKLQLIIPLGKEASRGDQLENAHYFTTRGYAEQLLEQELTLPHFQEKVREVFAKQSDYLSAMTSSSELQSPESFYQLLSADISSATKEN</sequence>
<protein>
    <recommendedName>
        <fullName evidence="1">UDP-N-acetylglucosamine--N-acetylmuramyl-(pentapeptide) pyrophosphoryl-undecaprenol N-acetylglucosamine transferase</fullName>
        <ecNumber evidence="1">2.4.1.227</ecNumber>
    </recommendedName>
    <alternativeName>
        <fullName evidence="1">Undecaprenyl-PP-MurNAc-pentapeptide-UDPGlcNAc GlcNAc transferase</fullName>
    </alternativeName>
</protein>